<sequence>MNKMAGVVLAGGQSRRFGSPKAFAKFNGKYFFEIAVETLRTVVEDIYIVSHPSLIDCFRQKTAEKVIMDDERYRGQGPLAGIYTVMKECEAEWIFVLPCDMPYMRPEAAAKLAKYANEKFDAIICAHFGRIQPLVGIYHRRTCKQIEKLLQAQDNRMKSLFRHCHVHYVNEQDFWEDEIVFRNVNTPNEFDDIVT</sequence>
<comment type="function">
    <text evidence="1">Transfers a GMP moiety from GTP to Mo-molybdopterin (Mo-MPT) cofactor (Moco or molybdenum cofactor) to form Mo-molybdopterin guanine dinucleotide (Mo-MGD) cofactor.</text>
</comment>
<comment type="catalytic activity">
    <reaction evidence="1">
        <text>Mo-molybdopterin + GTP + H(+) = Mo-molybdopterin guanine dinucleotide + diphosphate</text>
        <dbReference type="Rhea" id="RHEA:34243"/>
        <dbReference type="ChEBI" id="CHEBI:15378"/>
        <dbReference type="ChEBI" id="CHEBI:33019"/>
        <dbReference type="ChEBI" id="CHEBI:37565"/>
        <dbReference type="ChEBI" id="CHEBI:71302"/>
        <dbReference type="ChEBI" id="CHEBI:71310"/>
        <dbReference type="EC" id="2.7.7.77"/>
    </reaction>
</comment>
<comment type="cofactor">
    <cofactor evidence="1">
        <name>Mg(2+)</name>
        <dbReference type="ChEBI" id="CHEBI:18420"/>
    </cofactor>
</comment>
<comment type="subcellular location">
    <subcellularLocation>
        <location evidence="1">Cytoplasm</location>
    </subcellularLocation>
</comment>
<comment type="domain">
    <text evidence="1">The N-terminal domain determines nucleotide recognition and specific binding, while the C-terminal domain determines the specific binding to the target protein.</text>
</comment>
<comment type="similarity">
    <text evidence="1">Belongs to the MobA family.</text>
</comment>
<organism>
    <name type="scientific">Geobacillus sp. (strain WCH70)</name>
    <dbReference type="NCBI Taxonomy" id="471223"/>
    <lineage>
        <taxon>Bacteria</taxon>
        <taxon>Bacillati</taxon>
        <taxon>Bacillota</taxon>
        <taxon>Bacilli</taxon>
        <taxon>Bacillales</taxon>
        <taxon>Anoxybacillaceae</taxon>
        <taxon>Geobacillus</taxon>
    </lineage>
</organism>
<name>MOBA_GEOSW</name>
<feature type="chain" id="PRO_1000205075" description="Probable molybdenum cofactor guanylyltransferase">
    <location>
        <begin position="1"/>
        <end position="195"/>
    </location>
</feature>
<feature type="binding site" evidence="1">
    <location>
        <begin position="9"/>
        <end position="11"/>
    </location>
    <ligand>
        <name>GTP</name>
        <dbReference type="ChEBI" id="CHEBI:37565"/>
    </ligand>
</feature>
<feature type="binding site" evidence="1">
    <location>
        <position position="21"/>
    </location>
    <ligand>
        <name>GTP</name>
        <dbReference type="ChEBI" id="CHEBI:37565"/>
    </ligand>
</feature>
<feature type="binding site" evidence="1">
    <location>
        <position position="69"/>
    </location>
    <ligand>
        <name>GTP</name>
        <dbReference type="ChEBI" id="CHEBI:37565"/>
    </ligand>
</feature>
<feature type="binding site" evidence="1">
    <location>
        <position position="100"/>
    </location>
    <ligand>
        <name>GTP</name>
        <dbReference type="ChEBI" id="CHEBI:37565"/>
    </ligand>
</feature>
<feature type="binding site" evidence="1">
    <location>
        <position position="100"/>
    </location>
    <ligand>
        <name>Mg(2+)</name>
        <dbReference type="ChEBI" id="CHEBI:18420"/>
    </ligand>
</feature>
<proteinExistence type="inferred from homology"/>
<evidence type="ECO:0000255" key="1">
    <source>
        <dbReference type="HAMAP-Rule" id="MF_00316"/>
    </source>
</evidence>
<reference key="1">
    <citation type="submission" date="2009-06" db="EMBL/GenBank/DDBJ databases">
        <title>Complete sequence of chromosome of Geopacillus sp. WCH70.</title>
        <authorList>
            <consortium name="US DOE Joint Genome Institute"/>
            <person name="Lucas S."/>
            <person name="Copeland A."/>
            <person name="Lapidus A."/>
            <person name="Glavina del Rio T."/>
            <person name="Dalin E."/>
            <person name="Tice H."/>
            <person name="Bruce D."/>
            <person name="Goodwin L."/>
            <person name="Pitluck S."/>
            <person name="Chertkov O."/>
            <person name="Brettin T."/>
            <person name="Detter J.C."/>
            <person name="Han C."/>
            <person name="Larimer F."/>
            <person name="Land M."/>
            <person name="Hauser L."/>
            <person name="Kyrpides N."/>
            <person name="Mikhailova N."/>
            <person name="Brumm P."/>
            <person name="Mead D.A."/>
            <person name="Richardson P."/>
        </authorList>
    </citation>
    <scope>NUCLEOTIDE SEQUENCE [LARGE SCALE GENOMIC DNA]</scope>
    <source>
        <strain>WCH70</strain>
    </source>
</reference>
<dbReference type="EC" id="2.7.7.77" evidence="1"/>
<dbReference type="EMBL" id="CP001638">
    <property type="protein sequence ID" value="ACS23612.1"/>
    <property type="molecule type" value="Genomic_DNA"/>
</dbReference>
<dbReference type="SMR" id="C5D754"/>
<dbReference type="STRING" id="471223.GWCH70_0724"/>
<dbReference type="KEGG" id="gwc:GWCH70_0724"/>
<dbReference type="eggNOG" id="COG0746">
    <property type="taxonomic scope" value="Bacteria"/>
</dbReference>
<dbReference type="HOGENOM" id="CLU_055597_2_0_9"/>
<dbReference type="OrthoDB" id="9788394at2"/>
<dbReference type="GO" id="GO:0005737">
    <property type="term" value="C:cytoplasm"/>
    <property type="evidence" value="ECO:0007669"/>
    <property type="project" value="UniProtKB-SubCell"/>
</dbReference>
<dbReference type="GO" id="GO:0005525">
    <property type="term" value="F:GTP binding"/>
    <property type="evidence" value="ECO:0007669"/>
    <property type="project" value="UniProtKB-UniRule"/>
</dbReference>
<dbReference type="GO" id="GO:0046872">
    <property type="term" value="F:metal ion binding"/>
    <property type="evidence" value="ECO:0007669"/>
    <property type="project" value="UniProtKB-KW"/>
</dbReference>
<dbReference type="GO" id="GO:0061603">
    <property type="term" value="F:molybdenum cofactor guanylyltransferase activity"/>
    <property type="evidence" value="ECO:0007669"/>
    <property type="project" value="UniProtKB-EC"/>
</dbReference>
<dbReference type="GO" id="GO:0006777">
    <property type="term" value="P:Mo-molybdopterin cofactor biosynthetic process"/>
    <property type="evidence" value="ECO:0007669"/>
    <property type="project" value="UniProtKB-KW"/>
</dbReference>
<dbReference type="CDD" id="cd02503">
    <property type="entry name" value="MobA"/>
    <property type="match status" value="1"/>
</dbReference>
<dbReference type="Gene3D" id="3.90.550.10">
    <property type="entry name" value="Spore Coat Polysaccharide Biosynthesis Protein SpsA, Chain A"/>
    <property type="match status" value="1"/>
</dbReference>
<dbReference type="HAMAP" id="MF_00316">
    <property type="entry name" value="MobA"/>
    <property type="match status" value="1"/>
</dbReference>
<dbReference type="InterPro" id="IPR025877">
    <property type="entry name" value="MobA-like_NTP_Trfase"/>
</dbReference>
<dbReference type="InterPro" id="IPR013482">
    <property type="entry name" value="Molybde_CF_guanTrfase"/>
</dbReference>
<dbReference type="InterPro" id="IPR029044">
    <property type="entry name" value="Nucleotide-diphossugar_trans"/>
</dbReference>
<dbReference type="PANTHER" id="PTHR19136">
    <property type="entry name" value="MOLYBDENUM COFACTOR GUANYLYLTRANSFERASE"/>
    <property type="match status" value="1"/>
</dbReference>
<dbReference type="PANTHER" id="PTHR19136:SF81">
    <property type="entry name" value="MOLYBDENUM COFACTOR GUANYLYLTRANSFERASE"/>
    <property type="match status" value="1"/>
</dbReference>
<dbReference type="Pfam" id="PF12804">
    <property type="entry name" value="NTP_transf_3"/>
    <property type="match status" value="1"/>
</dbReference>
<dbReference type="SUPFAM" id="SSF53448">
    <property type="entry name" value="Nucleotide-diphospho-sugar transferases"/>
    <property type="match status" value="1"/>
</dbReference>
<accession>C5D754</accession>
<gene>
    <name evidence="1" type="primary">mobA</name>
    <name type="ordered locus">GWCH70_0724</name>
</gene>
<protein>
    <recommendedName>
        <fullName evidence="1">Probable molybdenum cofactor guanylyltransferase</fullName>
        <shortName evidence="1">MoCo guanylyltransferase</shortName>
        <ecNumber evidence="1">2.7.7.77</ecNumber>
    </recommendedName>
    <alternativeName>
        <fullName evidence="1">GTP:molybdopterin guanylyltransferase</fullName>
    </alternativeName>
    <alternativeName>
        <fullName evidence="1">Mo-MPT guanylyltransferase</fullName>
    </alternativeName>
    <alternativeName>
        <fullName evidence="1">Molybdopterin guanylyltransferase</fullName>
    </alternativeName>
    <alternativeName>
        <fullName evidence="1">Molybdopterin-guanine dinucleotide synthase</fullName>
        <shortName evidence="1">MGD synthase</shortName>
    </alternativeName>
</protein>
<keyword id="KW-0963">Cytoplasm</keyword>
<keyword id="KW-0342">GTP-binding</keyword>
<keyword id="KW-0460">Magnesium</keyword>
<keyword id="KW-0479">Metal-binding</keyword>
<keyword id="KW-0501">Molybdenum cofactor biosynthesis</keyword>
<keyword id="KW-0547">Nucleotide-binding</keyword>
<keyword id="KW-0808">Transferase</keyword>